<comment type="function">
    <text evidence="1">Specifically methylates the cytosine at position 1962 (m5C1962) of 23S rRNA.</text>
</comment>
<comment type="catalytic activity">
    <reaction evidence="1">
        <text>cytidine(1962) in 23S rRNA + S-adenosyl-L-methionine = 5-methylcytidine(1962) in 23S rRNA + S-adenosyl-L-homocysteine + H(+)</text>
        <dbReference type="Rhea" id="RHEA:42912"/>
        <dbReference type="Rhea" id="RHEA-COMP:10382"/>
        <dbReference type="Rhea" id="RHEA-COMP:10386"/>
        <dbReference type="ChEBI" id="CHEBI:15378"/>
        <dbReference type="ChEBI" id="CHEBI:57856"/>
        <dbReference type="ChEBI" id="CHEBI:59789"/>
        <dbReference type="ChEBI" id="CHEBI:74483"/>
        <dbReference type="ChEBI" id="CHEBI:82748"/>
        <dbReference type="EC" id="2.1.1.191"/>
    </reaction>
</comment>
<comment type="subcellular location">
    <subcellularLocation>
        <location evidence="1">Cytoplasm</location>
    </subcellularLocation>
</comment>
<comment type="similarity">
    <text evidence="1">Belongs to the methyltransferase superfamily. RlmI family.</text>
</comment>
<comment type="sequence caution" evidence="2">
    <conflict type="erroneous initiation">
        <sequence resource="EMBL-CDS" id="ABV13223"/>
    </conflict>
</comment>
<reference key="1">
    <citation type="submission" date="2007-08" db="EMBL/GenBank/DDBJ databases">
        <authorList>
            <consortium name="The Citrobacter koseri Genome Sequencing Project"/>
            <person name="McClelland M."/>
            <person name="Sanderson E.K."/>
            <person name="Porwollik S."/>
            <person name="Spieth J."/>
            <person name="Clifton W.S."/>
            <person name="Latreille P."/>
            <person name="Courtney L."/>
            <person name="Wang C."/>
            <person name="Pepin K."/>
            <person name="Bhonagiri V."/>
            <person name="Nash W."/>
            <person name="Johnson M."/>
            <person name="Thiruvilangam P."/>
            <person name="Wilson R."/>
        </authorList>
    </citation>
    <scope>NUCLEOTIDE SEQUENCE [LARGE SCALE GENOMIC DNA]</scope>
    <source>
        <strain>ATCC BAA-895 / CDC 4225-83 / SGSC4696</strain>
    </source>
</reference>
<accession>A8AIB0</accession>
<name>RLMI_CITK8</name>
<feature type="chain" id="PRO_0000366218" description="Ribosomal RNA large subunit methyltransferase I">
    <location>
        <begin position="1"/>
        <end position="396"/>
    </location>
</feature>
<feature type="domain" description="PUA" evidence="1">
    <location>
        <begin position="2"/>
        <end position="79"/>
    </location>
</feature>
<dbReference type="EC" id="2.1.1.191" evidence="1"/>
<dbReference type="EMBL" id="CP000822">
    <property type="protein sequence ID" value="ABV13223.1"/>
    <property type="status" value="ALT_INIT"/>
    <property type="molecule type" value="Genomic_DNA"/>
</dbReference>
<dbReference type="RefSeq" id="WP_048902395.1">
    <property type="nucleotide sequence ID" value="NC_009792.1"/>
</dbReference>
<dbReference type="SMR" id="A8AIB0"/>
<dbReference type="STRING" id="290338.CKO_02099"/>
<dbReference type="GeneID" id="45136048"/>
<dbReference type="KEGG" id="cko:CKO_02099"/>
<dbReference type="HOGENOM" id="CLU_014042_0_0_6"/>
<dbReference type="OrthoDB" id="9805492at2"/>
<dbReference type="Proteomes" id="UP000008148">
    <property type="component" value="Chromosome"/>
</dbReference>
<dbReference type="GO" id="GO:0005737">
    <property type="term" value="C:cytoplasm"/>
    <property type="evidence" value="ECO:0007669"/>
    <property type="project" value="UniProtKB-SubCell"/>
</dbReference>
<dbReference type="GO" id="GO:0003723">
    <property type="term" value="F:RNA binding"/>
    <property type="evidence" value="ECO:0007669"/>
    <property type="project" value="UniProtKB-KW"/>
</dbReference>
<dbReference type="GO" id="GO:0016434">
    <property type="term" value="F:rRNA (cytosine) methyltransferase activity"/>
    <property type="evidence" value="ECO:0007669"/>
    <property type="project" value="UniProtKB-UniRule"/>
</dbReference>
<dbReference type="CDD" id="cd02440">
    <property type="entry name" value="AdoMet_MTases"/>
    <property type="match status" value="1"/>
</dbReference>
<dbReference type="CDD" id="cd21153">
    <property type="entry name" value="PUA_RlmI"/>
    <property type="match status" value="1"/>
</dbReference>
<dbReference type="CDD" id="cd11572">
    <property type="entry name" value="RlmI_M_like"/>
    <property type="match status" value="1"/>
</dbReference>
<dbReference type="FunFam" id="2.30.130.10:FF:000005">
    <property type="entry name" value="Ribosomal RNA large subunit methyltransferase I"/>
    <property type="match status" value="1"/>
</dbReference>
<dbReference type="FunFam" id="3.30.750.80:FF:000002">
    <property type="entry name" value="Ribosomal RNA large subunit methyltransferase I"/>
    <property type="match status" value="1"/>
</dbReference>
<dbReference type="FunFam" id="3.40.50.150:FF:000044">
    <property type="entry name" value="Ribosomal RNA large subunit methyltransferase I"/>
    <property type="match status" value="1"/>
</dbReference>
<dbReference type="Gene3D" id="2.30.130.10">
    <property type="entry name" value="PUA domain"/>
    <property type="match status" value="1"/>
</dbReference>
<dbReference type="Gene3D" id="3.30.750.80">
    <property type="entry name" value="RNA methyltransferase domain (HRMD) like"/>
    <property type="match status" value="1"/>
</dbReference>
<dbReference type="Gene3D" id="3.40.50.150">
    <property type="entry name" value="Vaccinia Virus protein VP39"/>
    <property type="match status" value="1"/>
</dbReference>
<dbReference type="HAMAP" id="MF_01857">
    <property type="entry name" value="23SrRNA_methyltr_I"/>
    <property type="match status" value="1"/>
</dbReference>
<dbReference type="InterPro" id="IPR002478">
    <property type="entry name" value="PUA"/>
</dbReference>
<dbReference type="InterPro" id="IPR015947">
    <property type="entry name" value="PUA-like_sf"/>
</dbReference>
<dbReference type="InterPro" id="IPR036974">
    <property type="entry name" value="PUA_sf"/>
</dbReference>
<dbReference type="InterPro" id="IPR023542">
    <property type="entry name" value="RLMI"/>
</dbReference>
<dbReference type="InterPro" id="IPR041532">
    <property type="entry name" value="RlmI-like_PUA"/>
</dbReference>
<dbReference type="InterPro" id="IPR019614">
    <property type="entry name" value="SAM-dep_methyl-trfase"/>
</dbReference>
<dbReference type="InterPro" id="IPR029063">
    <property type="entry name" value="SAM-dependent_MTases_sf"/>
</dbReference>
<dbReference type="NCBIfam" id="NF011707">
    <property type="entry name" value="PRK15128.1"/>
    <property type="match status" value="1"/>
</dbReference>
<dbReference type="PANTHER" id="PTHR42873">
    <property type="entry name" value="RIBOSOMAL RNA LARGE SUBUNIT METHYLTRANSFERASE"/>
    <property type="match status" value="1"/>
</dbReference>
<dbReference type="PANTHER" id="PTHR42873:SF1">
    <property type="entry name" value="S-ADENOSYLMETHIONINE-DEPENDENT METHYLTRANSFERASE DOMAIN-CONTAINING PROTEIN"/>
    <property type="match status" value="1"/>
</dbReference>
<dbReference type="Pfam" id="PF10672">
    <property type="entry name" value="Methyltrans_SAM"/>
    <property type="match status" value="1"/>
</dbReference>
<dbReference type="Pfam" id="PF17785">
    <property type="entry name" value="PUA_3"/>
    <property type="match status" value="1"/>
</dbReference>
<dbReference type="SMART" id="SM00359">
    <property type="entry name" value="PUA"/>
    <property type="match status" value="1"/>
</dbReference>
<dbReference type="SUPFAM" id="SSF88697">
    <property type="entry name" value="PUA domain-like"/>
    <property type="match status" value="1"/>
</dbReference>
<dbReference type="SUPFAM" id="SSF53335">
    <property type="entry name" value="S-adenosyl-L-methionine-dependent methyltransferases"/>
    <property type="match status" value="1"/>
</dbReference>
<dbReference type="PROSITE" id="PS50890">
    <property type="entry name" value="PUA"/>
    <property type="match status" value="1"/>
</dbReference>
<organism>
    <name type="scientific">Citrobacter koseri (strain ATCC BAA-895 / CDC 4225-83 / SGSC4696)</name>
    <dbReference type="NCBI Taxonomy" id="290338"/>
    <lineage>
        <taxon>Bacteria</taxon>
        <taxon>Pseudomonadati</taxon>
        <taxon>Pseudomonadota</taxon>
        <taxon>Gammaproteobacteria</taxon>
        <taxon>Enterobacterales</taxon>
        <taxon>Enterobacteriaceae</taxon>
        <taxon>Citrobacter</taxon>
    </lineage>
</organism>
<proteinExistence type="inferred from homology"/>
<keyword id="KW-0963">Cytoplasm</keyword>
<keyword id="KW-0489">Methyltransferase</keyword>
<keyword id="KW-1185">Reference proteome</keyword>
<keyword id="KW-0694">RNA-binding</keyword>
<keyword id="KW-0698">rRNA processing</keyword>
<keyword id="KW-0949">S-adenosyl-L-methionine</keyword>
<keyword id="KW-0808">Transferase</keyword>
<gene>
    <name evidence="1" type="primary">rlmI</name>
    <name type="ordered locus">CKO_02099</name>
</gene>
<protein>
    <recommendedName>
        <fullName evidence="1">Ribosomal RNA large subunit methyltransferase I</fullName>
        <ecNumber evidence="1">2.1.1.191</ecNumber>
    </recommendedName>
    <alternativeName>
        <fullName evidence="1">23S rRNA m5C1962 methyltransferase</fullName>
    </alternativeName>
    <alternativeName>
        <fullName evidence="1">rRNA (cytosine-C(5)-)-methyltransferase RlmI</fullName>
    </alternativeName>
</protein>
<evidence type="ECO:0000255" key="1">
    <source>
        <dbReference type="HAMAP-Rule" id="MF_01857"/>
    </source>
</evidence>
<evidence type="ECO:0000305" key="2"/>
<sequence length="396" mass="44392">MSVRLVLAKGREKSLLRRHPWVFSGAVARMEGKASLGETIDIVDHQGKWLARGAYSPASQIRARVWTFDQAESIDIAFFTRRLHQAQQWRDWLAKKDGLDSYRLIAGESDGLPGITIDRFGNFLVLQLLSAGAEYQRAALISALQTQYPECAIYDRSDVAVRKKEGMELTQGPVTGELPPALLPIEEHGMKLLVDIQGGHKTGYYLDQRDSRLATRRYVENQRVLNCFSYTGGFAVSALMGGCRQVVSVDTSQEALDIAKQNVELNKLDLSKAEFVRDDVFKLLRAYRDRREKFDVIVMDPPKFVENKSQLMGACRGYKDINMLAIQLLNPGGVLLTFSCSGLMTTDLFQKIIADAAIDAGRDVQFIEQFRQAADHPVIATYPEGLYLKGFACRVM</sequence>